<accession>B0VQS5</accession>
<sequence length="137" mass="15436">MLQPKRTKFRKVHKGRNTGLAHRGSTVSFGSIAIKATERGRMTARQIEAARRAISRRIKRGGKIFIRVFPDKPITEKPLEVRMGNGKGNVEYWVCEIKPGKILYEIEGVNEDLAREAFALAAAKLPFKTTIVTRTVM</sequence>
<protein>
    <recommendedName>
        <fullName evidence="1">Large ribosomal subunit protein uL16</fullName>
    </recommendedName>
    <alternativeName>
        <fullName evidence="2">50S ribosomal protein L16</fullName>
    </alternativeName>
</protein>
<organism>
    <name type="scientific">Acinetobacter baumannii (strain SDF)</name>
    <dbReference type="NCBI Taxonomy" id="509170"/>
    <lineage>
        <taxon>Bacteria</taxon>
        <taxon>Pseudomonadati</taxon>
        <taxon>Pseudomonadota</taxon>
        <taxon>Gammaproteobacteria</taxon>
        <taxon>Moraxellales</taxon>
        <taxon>Moraxellaceae</taxon>
        <taxon>Acinetobacter</taxon>
        <taxon>Acinetobacter calcoaceticus/baumannii complex</taxon>
    </lineage>
</organism>
<keyword id="KW-0687">Ribonucleoprotein</keyword>
<keyword id="KW-0689">Ribosomal protein</keyword>
<keyword id="KW-0694">RNA-binding</keyword>
<keyword id="KW-0699">rRNA-binding</keyword>
<keyword id="KW-0820">tRNA-binding</keyword>
<dbReference type="EMBL" id="CU468230">
    <property type="protein sequence ID" value="CAO99821.2"/>
    <property type="molecule type" value="Genomic_DNA"/>
</dbReference>
<dbReference type="SMR" id="B0VQS5"/>
<dbReference type="KEGG" id="abm:ABSDF0430"/>
<dbReference type="HOGENOM" id="CLU_078858_2_1_6"/>
<dbReference type="Proteomes" id="UP000001741">
    <property type="component" value="Chromosome"/>
</dbReference>
<dbReference type="GO" id="GO:0022625">
    <property type="term" value="C:cytosolic large ribosomal subunit"/>
    <property type="evidence" value="ECO:0007669"/>
    <property type="project" value="TreeGrafter"/>
</dbReference>
<dbReference type="GO" id="GO:0019843">
    <property type="term" value="F:rRNA binding"/>
    <property type="evidence" value="ECO:0007669"/>
    <property type="project" value="UniProtKB-UniRule"/>
</dbReference>
<dbReference type="GO" id="GO:0003735">
    <property type="term" value="F:structural constituent of ribosome"/>
    <property type="evidence" value="ECO:0007669"/>
    <property type="project" value="InterPro"/>
</dbReference>
<dbReference type="GO" id="GO:0000049">
    <property type="term" value="F:tRNA binding"/>
    <property type="evidence" value="ECO:0007669"/>
    <property type="project" value="UniProtKB-KW"/>
</dbReference>
<dbReference type="GO" id="GO:0006412">
    <property type="term" value="P:translation"/>
    <property type="evidence" value="ECO:0007669"/>
    <property type="project" value="UniProtKB-UniRule"/>
</dbReference>
<dbReference type="CDD" id="cd01433">
    <property type="entry name" value="Ribosomal_L16_L10e"/>
    <property type="match status" value="1"/>
</dbReference>
<dbReference type="FunFam" id="3.90.1170.10:FF:000001">
    <property type="entry name" value="50S ribosomal protein L16"/>
    <property type="match status" value="1"/>
</dbReference>
<dbReference type="Gene3D" id="3.90.1170.10">
    <property type="entry name" value="Ribosomal protein L10e/L16"/>
    <property type="match status" value="1"/>
</dbReference>
<dbReference type="HAMAP" id="MF_01342">
    <property type="entry name" value="Ribosomal_uL16"/>
    <property type="match status" value="1"/>
</dbReference>
<dbReference type="InterPro" id="IPR047873">
    <property type="entry name" value="Ribosomal_uL16"/>
</dbReference>
<dbReference type="InterPro" id="IPR000114">
    <property type="entry name" value="Ribosomal_uL16_bact-type"/>
</dbReference>
<dbReference type="InterPro" id="IPR020798">
    <property type="entry name" value="Ribosomal_uL16_CS"/>
</dbReference>
<dbReference type="InterPro" id="IPR016180">
    <property type="entry name" value="Ribosomal_uL16_dom"/>
</dbReference>
<dbReference type="InterPro" id="IPR036920">
    <property type="entry name" value="Ribosomal_uL16_sf"/>
</dbReference>
<dbReference type="NCBIfam" id="TIGR01164">
    <property type="entry name" value="rplP_bact"/>
    <property type="match status" value="1"/>
</dbReference>
<dbReference type="PANTHER" id="PTHR12220">
    <property type="entry name" value="50S/60S RIBOSOMAL PROTEIN L16"/>
    <property type="match status" value="1"/>
</dbReference>
<dbReference type="PANTHER" id="PTHR12220:SF13">
    <property type="entry name" value="LARGE RIBOSOMAL SUBUNIT PROTEIN UL16M"/>
    <property type="match status" value="1"/>
</dbReference>
<dbReference type="Pfam" id="PF00252">
    <property type="entry name" value="Ribosomal_L16"/>
    <property type="match status" value="1"/>
</dbReference>
<dbReference type="PRINTS" id="PR00060">
    <property type="entry name" value="RIBOSOMALL16"/>
</dbReference>
<dbReference type="SUPFAM" id="SSF54686">
    <property type="entry name" value="Ribosomal protein L16p/L10e"/>
    <property type="match status" value="1"/>
</dbReference>
<dbReference type="PROSITE" id="PS00701">
    <property type="entry name" value="RIBOSOMAL_L16_2"/>
    <property type="match status" value="1"/>
</dbReference>
<evidence type="ECO:0000255" key="1">
    <source>
        <dbReference type="HAMAP-Rule" id="MF_01342"/>
    </source>
</evidence>
<evidence type="ECO:0000305" key="2"/>
<reference key="1">
    <citation type="journal article" date="2008" name="PLoS ONE">
        <title>Comparative analysis of Acinetobacters: three genomes for three lifestyles.</title>
        <authorList>
            <person name="Vallenet D."/>
            <person name="Nordmann P."/>
            <person name="Barbe V."/>
            <person name="Poirel L."/>
            <person name="Mangenot S."/>
            <person name="Bataille E."/>
            <person name="Dossat C."/>
            <person name="Gas S."/>
            <person name="Kreimeyer A."/>
            <person name="Lenoble P."/>
            <person name="Oztas S."/>
            <person name="Poulain J."/>
            <person name="Segurens B."/>
            <person name="Robert C."/>
            <person name="Abergel C."/>
            <person name="Claverie J.-M."/>
            <person name="Raoult D."/>
            <person name="Medigue C."/>
            <person name="Weissenbach J."/>
            <person name="Cruveiller S."/>
        </authorList>
    </citation>
    <scope>NUCLEOTIDE SEQUENCE [LARGE SCALE GENOMIC DNA]</scope>
    <source>
        <strain>SDF</strain>
    </source>
</reference>
<comment type="function">
    <text evidence="1">Binds 23S rRNA and is also seen to make contacts with the A and possibly P site tRNAs.</text>
</comment>
<comment type="subunit">
    <text evidence="1">Part of the 50S ribosomal subunit.</text>
</comment>
<comment type="similarity">
    <text evidence="1">Belongs to the universal ribosomal protein uL16 family.</text>
</comment>
<name>RL16_ACIBS</name>
<gene>
    <name evidence="1" type="primary">rplP</name>
    <name type="ordered locus">ABSDF0430</name>
</gene>
<proteinExistence type="inferred from homology"/>
<feature type="chain" id="PRO_1000142909" description="Large ribosomal subunit protein uL16">
    <location>
        <begin position="1"/>
        <end position="137"/>
    </location>
</feature>